<keyword id="KW-0235">DNA replication</keyword>
<keyword id="KW-0238">DNA-binding</keyword>
<keyword id="KW-0239">DNA-directed DNA polymerase</keyword>
<keyword id="KW-0269">Exonuclease</keyword>
<keyword id="KW-0378">Hydrolase</keyword>
<keyword id="KW-0511">Multifunctional enzyme</keyword>
<keyword id="KW-0540">Nuclease</keyword>
<keyword id="KW-0548">Nucleotidyltransferase</keyword>
<keyword id="KW-1185">Reference proteome</keyword>
<keyword id="KW-0808">Transferase</keyword>
<comment type="function">
    <text evidence="1">Possesses two activities: a DNA synthesis (polymerase) and an exonucleolytic activity that degrades single-stranded DNA in the 3'- to 5'-direction. Has a template-primer preference which is characteristic of a replicative DNA polymerase (By similarity).</text>
</comment>
<comment type="catalytic activity">
    <reaction>
        <text>DNA(n) + a 2'-deoxyribonucleoside 5'-triphosphate = DNA(n+1) + diphosphate</text>
        <dbReference type="Rhea" id="RHEA:22508"/>
        <dbReference type="Rhea" id="RHEA-COMP:17339"/>
        <dbReference type="Rhea" id="RHEA-COMP:17340"/>
        <dbReference type="ChEBI" id="CHEBI:33019"/>
        <dbReference type="ChEBI" id="CHEBI:61560"/>
        <dbReference type="ChEBI" id="CHEBI:173112"/>
        <dbReference type="EC" id="2.7.7.7"/>
    </reaction>
</comment>
<comment type="catalytic activity">
    <reaction evidence="2">
        <text>Exonucleolytic cleavage in the 3'- to 5'-direction to yield nucleoside 5'-phosphates.</text>
        <dbReference type="EC" id="3.1.11.1"/>
    </reaction>
</comment>
<comment type="subunit">
    <text evidence="1">Heterodimer of a large subunit and a small subunit.</text>
</comment>
<comment type="similarity">
    <text evidence="3">Belongs to the archaeal DNA polymerase II family.</text>
</comment>
<feature type="chain" id="PRO_0000152578" description="DNA polymerase II large subunit">
    <location>
        <begin position="1"/>
        <end position="1092"/>
    </location>
</feature>
<proteinExistence type="inferred from homology"/>
<evidence type="ECO:0000250" key="1"/>
<evidence type="ECO:0000255" key="2">
    <source>
        <dbReference type="HAMAP-Rule" id="MF_00324"/>
    </source>
</evidence>
<evidence type="ECO:0000305" key="3"/>
<protein>
    <recommendedName>
        <fullName>DNA polymerase II large subunit</fullName>
        <shortName>Pol II</shortName>
        <ecNumber evidence="2">2.7.7.7</ecNumber>
    </recommendedName>
    <alternativeName>
        <fullName evidence="2">Exodeoxyribonuclease large subunit</fullName>
        <ecNumber evidence="2">3.1.11.1</ecNumber>
    </alternativeName>
</protein>
<gene>
    <name type="primary">polC</name>
    <name type="ordered locus">MTH_1536</name>
</gene>
<accession>O27579</accession>
<reference key="1">
    <citation type="journal article" date="1997" name="J. Bacteriol.">
        <title>Complete genome sequence of Methanobacterium thermoautotrophicum deltaH: functional analysis and comparative genomics.</title>
        <authorList>
            <person name="Smith D.R."/>
            <person name="Doucette-Stamm L.A."/>
            <person name="Deloughery C."/>
            <person name="Lee H.-M."/>
            <person name="Dubois J."/>
            <person name="Aldredge T."/>
            <person name="Bashirzadeh R."/>
            <person name="Blakely D."/>
            <person name="Cook R."/>
            <person name="Gilbert K."/>
            <person name="Harrison D."/>
            <person name="Hoang L."/>
            <person name="Keagle P."/>
            <person name="Lumm W."/>
            <person name="Pothier B."/>
            <person name="Qiu D."/>
            <person name="Spadafora R."/>
            <person name="Vicare R."/>
            <person name="Wang Y."/>
            <person name="Wierzbowski J."/>
            <person name="Gibson R."/>
            <person name="Jiwani N."/>
            <person name="Caruso A."/>
            <person name="Bush D."/>
            <person name="Safer H."/>
            <person name="Patwell D."/>
            <person name="Prabhakar S."/>
            <person name="McDougall S."/>
            <person name="Shimer G."/>
            <person name="Goyal A."/>
            <person name="Pietrovski S."/>
            <person name="Church G.M."/>
            <person name="Daniels C.J."/>
            <person name="Mao J.-I."/>
            <person name="Rice P."/>
            <person name="Noelling J."/>
            <person name="Reeve J.N."/>
        </authorList>
    </citation>
    <scope>NUCLEOTIDE SEQUENCE [LARGE SCALE GENOMIC DNA]</scope>
    <source>
        <strain>ATCC 29096 / DSM 1053 / JCM 10044 / NBRC 100330 / Delta H</strain>
    </source>
</reference>
<organism>
    <name type="scientific">Methanothermobacter thermautotrophicus (strain ATCC 29096 / DSM 1053 / JCM 10044 / NBRC 100330 / Delta H)</name>
    <name type="common">Methanobacterium thermoautotrophicum</name>
    <dbReference type="NCBI Taxonomy" id="187420"/>
    <lineage>
        <taxon>Archaea</taxon>
        <taxon>Methanobacteriati</taxon>
        <taxon>Methanobacteriota</taxon>
        <taxon>Methanomada group</taxon>
        <taxon>Methanobacteria</taxon>
        <taxon>Methanobacteriales</taxon>
        <taxon>Methanobacteriaceae</taxon>
        <taxon>Methanothermobacter</taxon>
    </lineage>
</organism>
<name>DP2L_METTH</name>
<dbReference type="EC" id="2.7.7.7" evidence="2"/>
<dbReference type="EC" id="3.1.11.1" evidence="2"/>
<dbReference type="EMBL" id="AE000666">
    <property type="protein sequence ID" value="AAB86010.1"/>
    <property type="molecule type" value="Genomic_DNA"/>
</dbReference>
<dbReference type="PIR" id="H69071">
    <property type="entry name" value="H69071"/>
</dbReference>
<dbReference type="SMR" id="O27579"/>
<dbReference type="FunCoup" id="O27579">
    <property type="interactions" value="18"/>
</dbReference>
<dbReference type="STRING" id="187420.MTH_1536"/>
<dbReference type="PaxDb" id="187420-MTH_1536"/>
<dbReference type="EnsemblBacteria" id="AAB86010">
    <property type="protein sequence ID" value="AAB86010"/>
    <property type="gene ID" value="MTH_1536"/>
</dbReference>
<dbReference type="KEGG" id="mth:MTH_1536"/>
<dbReference type="PATRIC" id="fig|187420.15.peg.1498"/>
<dbReference type="HOGENOM" id="CLU_001154_0_0_2"/>
<dbReference type="InParanoid" id="O27579"/>
<dbReference type="Proteomes" id="UP000005223">
    <property type="component" value="Chromosome"/>
</dbReference>
<dbReference type="GO" id="GO:0003677">
    <property type="term" value="F:DNA binding"/>
    <property type="evidence" value="ECO:0007669"/>
    <property type="project" value="UniProtKB-UniRule"/>
</dbReference>
<dbReference type="GO" id="GO:0003887">
    <property type="term" value="F:DNA-directed DNA polymerase activity"/>
    <property type="evidence" value="ECO:0007669"/>
    <property type="project" value="UniProtKB-UniRule"/>
</dbReference>
<dbReference type="GO" id="GO:0008310">
    <property type="term" value="F:single-stranded DNA 3'-5' DNA exonuclease activity"/>
    <property type="evidence" value="ECO:0007669"/>
    <property type="project" value="UniProtKB-EC"/>
</dbReference>
<dbReference type="GO" id="GO:0006308">
    <property type="term" value="P:DNA catabolic process"/>
    <property type="evidence" value="ECO:0007669"/>
    <property type="project" value="UniProtKB-UniRule"/>
</dbReference>
<dbReference type="GO" id="GO:0006261">
    <property type="term" value="P:DNA-templated DNA replication"/>
    <property type="evidence" value="ECO:0007669"/>
    <property type="project" value="UniProtKB-UniRule"/>
</dbReference>
<dbReference type="HAMAP" id="MF_00324">
    <property type="entry name" value="DNApol_II_L_arch"/>
    <property type="match status" value="1"/>
</dbReference>
<dbReference type="InterPro" id="IPR004475">
    <property type="entry name" value="PolC_DP2"/>
</dbReference>
<dbReference type="InterPro" id="IPR056172">
    <property type="entry name" value="PolC_DP2_cat_dom"/>
</dbReference>
<dbReference type="InterPro" id="IPR056171">
    <property type="entry name" value="PolC_DP2_central_dom"/>
</dbReference>
<dbReference type="InterPro" id="IPR016033">
    <property type="entry name" value="PolC_DP2_N"/>
</dbReference>
<dbReference type="InterPro" id="IPR054475">
    <property type="entry name" value="Znf-DPOE"/>
</dbReference>
<dbReference type="NCBIfam" id="TIGR00354">
    <property type="entry name" value="polC"/>
    <property type="match status" value="1"/>
</dbReference>
<dbReference type="NCBIfam" id="NF003103">
    <property type="entry name" value="PRK04023.1"/>
    <property type="match status" value="1"/>
</dbReference>
<dbReference type="PANTHER" id="PTHR42210">
    <property type="entry name" value="DNA POLYMERASE II LARGE SUBUNIT"/>
    <property type="match status" value="1"/>
</dbReference>
<dbReference type="PANTHER" id="PTHR42210:SF1">
    <property type="entry name" value="DNA POLYMERASE II LARGE SUBUNIT"/>
    <property type="match status" value="1"/>
</dbReference>
<dbReference type="Pfam" id="PF24846">
    <property type="entry name" value="PolC_DP2_cat"/>
    <property type="match status" value="1"/>
</dbReference>
<dbReference type="Pfam" id="PF24844">
    <property type="entry name" value="PolC_DP2_central"/>
    <property type="match status" value="1"/>
</dbReference>
<dbReference type="Pfam" id="PF03833">
    <property type="entry name" value="PolC_DP2_N"/>
    <property type="match status" value="1"/>
</dbReference>
<dbReference type="Pfam" id="PF22912">
    <property type="entry name" value="zf-DPOE"/>
    <property type="match status" value="1"/>
</dbReference>
<dbReference type="PIRSF" id="PIRSF016275">
    <property type="entry name" value="PolC_DP2"/>
    <property type="match status" value="1"/>
</dbReference>
<sequence>MMDYFNELERETERLYEIARKARARGLDVSTTPEIPLAKDLAERVEGLVGPEGIARRIKELEGDRGREEVAFQIAAEIASQAVPDDDPEEREKLADQALRTALAILTEGVVAAPLEGIARVRIKENFDKSRYLAVYFAGPIRSAGGTAAALSVLIADYIRLAVGLDRYKPVEREIERYVEEVELYESEVTNLQYSPKPDEVRLAASKIPVEVTGEPTDKVEVSHRDLERVETNNIRGGALLAMVEGVIQKAPKVLKYAKQLKLEGWDWLEKFSKAPKKGEGEEKVVVKADSKYVEDIIGGRPVLAYPSEKGAFRLRYGRARNTGLAAMGVHPATMELLQFLAVGTQMKIERPGKGNCVVPVDTIDGPVVKLRNGDVIRIEDAETASRVRSEVEEILFLGDMLVAFGEFLRNNHVLMPAGWCEEWWIQTILSSPKYPGDDPLNLSYYRTRWNELEVSAGDAFRISEEYDVPLHPRYTYFYHDVTVRELNMLREWLNTSQLEDELVLELRPEKRILEILGVPHRVKDSRVVIGHDDAHALIKTLRKPLEDSSDTVEALNRVSPVRIMKKAPTYIGTRVGRPEKTKERKMRPAPHVLFPIGKYGGSRRNIPDAAKKGSITVEIGRATCPSCRVSSMQSICPSCGSRTVIGEPGKRNINLAALLKRAAENVSVRKLDEIKGVEGMISAEKFPEPLEKGILRAKNDVYTFKDATIRHDSTDLPLTHFTPREVGVSVERLRELGYTRDCYGDELEDEDQILELRVQDVVISEDCADYLVRVANFVDDLLERFYDLERFYNVKTREDLVGHLIAGLAPHTSAAVLGRIIGFTGASACYAHPYFHSAKRRNCDSDEDSVMLLLDALLNFSKSYLPSSRGGSMDAPLVLSTRIDPEEIDDESHNIDTMDMIPLEVYERSFDHPRPSEVLDVIDNVEKRLGKPEQYTGLMFSHNTSRIDEGPKVCLYKLLPTMKEKVESQITLAEKIRAVDQRSVVEGVLMSHFLPDMMGNIRAFSRQKVRCTKCNRKYRRIPLSGECRCGGNLVLTVSKGSVIKYLEISKELASRYPIDPYLMQRIEILEYGVNSLFESDRSKQSSLDVFL</sequence>